<name>ARXS1_MOUSE</name>
<evidence type="ECO:0000255" key="1"/>
<evidence type="ECO:0000269" key="2">
    <source>
    </source>
</evidence>
<evidence type="ECO:0000303" key="3">
    <source>
    </source>
</evidence>
<evidence type="ECO:0000305" key="4"/>
<evidence type="ECO:0000312" key="5">
    <source>
        <dbReference type="MGI" id="MGI:1923469"/>
    </source>
</evidence>
<feature type="chain" id="PRO_0000438510" description="Adipocyte-related X-chromosome expressed sequence 1">
    <location>
        <begin position="1"/>
        <end position="180"/>
    </location>
</feature>
<feature type="topological domain" description="Cytoplasmic" evidence="1">
    <location>
        <begin position="1"/>
        <end position="11"/>
    </location>
</feature>
<feature type="transmembrane region" description="Helical; Signal-anchor for type II membrane protein" evidence="1">
    <location>
        <begin position="12"/>
        <end position="32"/>
    </location>
</feature>
<feature type="topological domain" description="Lumenal" evidence="1">
    <location>
        <begin position="33"/>
        <end position="180"/>
    </location>
</feature>
<feature type="glycosylation site" description="N-linked (GlcNAc...) asparagine" evidence="1">
    <location>
        <position position="141"/>
    </location>
</feature>
<protein>
    <recommendedName>
        <fullName evidence="3">Adipocyte-related X-chromosome expressed sequence 1</fullName>
    </recommendedName>
</protein>
<gene>
    <name evidence="3 5" type="primary">Arxes1</name>
</gene>
<dbReference type="EMBL" id="AK018307">
    <property type="protein sequence ID" value="BAB31154.1"/>
    <property type="molecule type" value="mRNA"/>
</dbReference>
<dbReference type="EMBL" id="AL671914">
    <property type="status" value="NOT_ANNOTATED_CDS"/>
    <property type="molecule type" value="Genomic_DNA"/>
</dbReference>
<dbReference type="CCDS" id="CCDS53192.1"/>
<dbReference type="RefSeq" id="NP_083817.1">
    <property type="nucleotide sequence ID" value="NM_029541.3"/>
</dbReference>
<dbReference type="SMR" id="C0HK79"/>
<dbReference type="FunCoup" id="C0HK79">
    <property type="interactions" value="351"/>
</dbReference>
<dbReference type="STRING" id="10090.ENSMUSP00000051250"/>
<dbReference type="GlyCosmos" id="C0HK79">
    <property type="glycosylation" value="1 site, No reported glycans"/>
</dbReference>
<dbReference type="GlyGen" id="C0HK79">
    <property type="glycosylation" value="1 site"/>
</dbReference>
<dbReference type="jPOST" id="C0HK79"/>
<dbReference type="PaxDb" id="10090-ENSMUSP00000051250"/>
<dbReference type="ProteomicsDB" id="281908"/>
<dbReference type="Pumba" id="C0HK79"/>
<dbReference type="DNASU" id="76219"/>
<dbReference type="Ensembl" id="ENSMUST00000057625.3">
    <property type="protein sequence ID" value="ENSMUSP00000062660.3"/>
    <property type="gene ID" value="ENSMUSG00000048355.3"/>
</dbReference>
<dbReference type="Ensembl" id="ENSMUST00000058119.9">
    <property type="protein sequence ID" value="ENSMUSP00000051250.8"/>
    <property type="gene ID" value="ENSMUSG00000048040.9"/>
</dbReference>
<dbReference type="GeneID" id="76219"/>
<dbReference type="KEGG" id="mmu:76219"/>
<dbReference type="KEGG" id="mmu:76976"/>
<dbReference type="AGR" id="MGI:1923469"/>
<dbReference type="CTD" id="76219"/>
<dbReference type="CTD" id="76976"/>
<dbReference type="MGI" id="MGI:1923469">
    <property type="gene designation" value="Arxes1"/>
</dbReference>
<dbReference type="VEuPathDB" id="HostDB:ENSMUSG00000048040"/>
<dbReference type="VEuPathDB" id="HostDB:ENSMUSG00000048355"/>
<dbReference type="eggNOG" id="KOG3372">
    <property type="taxonomic scope" value="Eukaryota"/>
</dbReference>
<dbReference type="InParanoid" id="C0HK79"/>
<dbReference type="OMA" id="AFDWSTH"/>
<dbReference type="OrthoDB" id="9552240at2759"/>
<dbReference type="BioGRID-ORCS" id="76219">
    <property type="hits" value="1 hit in 38 CRISPR screens"/>
</dbReference>
<dbReference type="BioGRID-ORCS" id="76976">
    <property type="hits" value="2 hits in 36 CRISPR screens"/>
</dbReference>
<dbReference type="PRO" id="PR:C0HK79"/>
<dbReference type="Proteomes" id="UP000000589">
    <property type="component" value="Chromosome X"/>
</dbReference>
<dbReference type="RNAct" id="C0HK79">
    <property type="molecule type" value="protein"/>
</dbReference>
<dbReference type="Bgee" id="ENSMUSG00000048040">
    <property type="expression patterns" value="Expressed in gonadal fat pad and 260 other cell types or tissues"/>
</dbReference>
<dbReference type="ExpressionAtlas" id="C0HK79">
    <property type="expression patterns" value="baseline and differential"/>
</dbReference>
<dbReference type="GO" id="GO:0005783">
    <property type="term" value="C:endoplasmic reticulum"/>
    <property type="evidence" value="ECO:0000314"/>
    <property type="project" value="MGI"/>
</dbReference>
<dbReference type="GO" id="GO:0005787">
    <property type="term" value="C:signal peptidase complex"/>
    <property type="evidence" value="ECO:0007669"/>
    <property type="project" value="InterPro"/>
</dbReference>
<dbReference type="GO" id="GO:0045444">
    <property type="term" value="P:fat cell differentiation"/>
    <property type="evidence" value="ECO:0000315"/>
    <property type="project" value="MGI"/>
</dbReference>
<dbReference type="GO" id="GO:0006465">
    <property type="term" value="P:signal peptide processing"/>
    <property type="evidence" value="ECO:0007669"/>
    <property type="project" value="InterPro"/>
</dbReference>
<dbReference type="InterPro" id="IPR007653">
    <property type="entry name" value="SPC3"/>
</dbReference>
<dbReference type="PANTHER" id="PTHR12804:SF6">
    <property type="entry name" value="ADIPOCYTE-RELATED X-CHROMOSOME EXPRESSED SEQUENCE 1-RELATED"/>
    <property type="match status" value="1"/>
</dbReference>
<dbReference type="PANTHER" id="PTHR12804">
    <property type="entry name" value="MICROSOMAL SIGNAL PEPTIDASE 23 KD SUBUNIT SPC22/23"/>
    <property type="match status" value="1"/>
</dbReference>
<dbReference type="Pfam" id="PF04573">
    <property type="entry name" value="SPC22"/>
    <property type="match status" value="1"/>
</dbReference>
<dbReference type="PIRSF" id="PIRSF016089">
    <property type="entry name" value="SPC22"/>
    <property type="match status" value="1"/>
</dbReference>
<proteinExistence type="evidence at protein level"/>
<sequence>MNSLLSRANSLFAFTLSVMAALTLGCILTTAFKDRSAPVRLHVSRILLKKVEDFTGPRKKSDLGFITFHISADLEKTFDWNVKQLFLYLSAEYSTKSNAVNQVVLWDKILLRGENPKLNLKDVKSKYFFFDDGHGLKGNRNVTLTLSWQVIPIAGILPLVTGSGRVSVPFPDSYEIATTF</sequence>
<accession>C0HK79</accession>
<accession>B1AUR7</accession>
<accession>Q8BK31</accession>
<accession>Q9D365</accession>
<accession>Q9D6F2</accession>
<comment type="function">
    <text evidence="2">Plays a role in adipogenesis.</text>
</comment>
<comment type="subcellular location">
    <subcellularLocation>
        <location evidence="2">Endoplasmic reticulum membrane</location>
        <topology evidence="4">Single-pass type II membrane protein</topology>
    </subcellularLocation>
</comment>
<comment type="tissue specificity">
    <text evidence="2">Strongly expressed in epididymal white and brown adipose tissue with low levels in heart.</text>
</comment>
<comment type="developmental stage">
    <text evidence="2">Strongly up-regulated during adipogenesis.</text>
</comment>
<comment type="induction">
    <text evidence="2">By the PPARG agonist rosiglitazone.</text>
</comment>
<comment type="miscellaneous">
    <text evidence="3">Arxes1 and Arxes2 appear to have arisen by retrotransposition of the signal peptidase Spcs3 followed by a segmental duplication event.</text>
</comment>
<comment type="similarity">
    <text evidence="4">Belongs to the SPCS3 family.</text>
</comment>
<organism>
    <name type="scientific">Mus musculus</name>
    <name type="common">Mouse</name>
    <dbReference type="NCBI Taxonomy" id="10090"/>
    <lineage>
        <taxon>Eukaryota</taxon>
        <taxon>Metazoa</taxon>
        <taxon>Chordata</taxon>
        <taxon>Craniata</taxon>
        <taxon>Vertebrata</taxon>
        <taxon>Euteleostomi</taxon>
        <taxon>Mammalia</taxon>
        <taxon>Eutheria</taxon>
        <taxon>Euarchontoglires</taxon>
        <taxon>Glires</taxon>
        <taxon>Rodentia</taxon>
        <taxon>Myomorpha</taxon>
        <taxon>Muroidea</taxon>
        <taxon>Muridae</taxon>
        <taxon>Murinae</taxon>
        <taxon>Mus</taxon>
        <taxon>Mus</taxon>
    </lineage>
</organism>
<reference key="1">
    <citation type="journal article" date="2005" name="Science">
        <title>The transcriptional landscape of the mammalian genome.</title>
        <authorList>
            <person name="Carninci P."/>
            <person name="Kasukawa T."/>
            <person name="Katayama S."/>
            <person name="Gough J."/>
            <person name="Frith M.C."/>
            <person name="Maeda N."/>
            <person name="Oyama R."/>
            <person name="Ravasi T."/>
            <person name="Lenhard B."/>
            <person name="Wells C."/>
            <person name="Kodzius R."/>
            <person name="Shimokawa K."/>
            <person name="Bajic V.B."/>
            <person name="Brenner S.E."/>
            <person name="Batalov S."/>
            <person name="Forrest A.R."/>
            <person name="Zavolan M."/>
            <person name="Davis M.J."/>
            <person name="Wilming L.G."/>
            <person name="Aidinis V."/>
            <person name="Allen J.E."/>
            <person name="Ambesi-Impiombato A."/>
            <person name="Apweiler R."/>
            <person name="Aturaliya R.N."/>
            <person name="Bailey T.L."/>
            <person name="Bansal M."/>
            <person name="Baxter L."/>
            <person name="Beisel K.W."/>
            <person name="Bersano T."/>
            <person name="Bono H."/>
            <person name="Chalk A.M."/>
            <person name="Chiu K.P."/>
            <person name="Choudhary V."/>
            <person name="Christoffels A."/>
            <person name="Clutterbuck D.R."/>
            <person name="Crowe M.L."/>
            <person name="Dalla E."/>
            <person name="Dalrymple B.P."/>
            <person name="de Bono B."/>
            <person name="Della Gatta G."/>
            <person name="di Bernardo D."/>
            <person name="Down T."/>
            <person name="Engstrom P."/>
            <person name="Fagiolini M."/>
            <person name="Faulkner G."/>
            <person name="Fletcher C.F."/>
            <person name="Fukushima T."/>
            <person name="Furuno M."/>
            <person name="Futaki S."/>
            <person name="Gariboldi M."/>
            <person name="Georgii-Hemming P."/>
            <person name="Gingeras T.R."/>
            <person name="Gojobori T."/>
            <person name="Green R.E."/>
            <person name="Gustincich S."/>
            <person name="Harbers M."/>
            <person name="Hayashi Y."/>
            <person name="Hensch T.K."/>
            <person name="Hirokawa N."/>
            <person name="Hill D."/>
            <person name="Huminiecki L."/>
            <person name="Iacono M."/>
            <person name="Ikeo K."/>
            <person name="Iwama A."/>
            <person name="Ishikawa T."/>
            <person name="Jakt M."/>
            <person name="Kanapin A."/>
            <person name="Katoh M."/>
            <person name="Kawasawa Y."/>
            <person name="Kelso J."/>
            <person name="Kitamura H."/>
            <person name="Kitano H."/>
            <person name="Kollias G."/>
            <person name="Krishnan S.P."/>
            <person name="Kruger A."/>
            <person name="Kummerfeld S.K."/>
            <person name="Kurochkin I.V."/>
            <person name="Lareau L.F."/>
            <person name="Lazarevic D."/>
            <person name="Lipovich L."/>
            <person name="Liu J."/>
            <person name="Liuni S."/>
            <person name="McWilliam S."/>
            <person name="Madan Babu M."/>
            <person name="Madera M."/>
            <person name="Marchionni L."/>
            <person name="Matsuda H."/>
            <person name="Matsuzawa S."/>
            <person name="Miki H."/>
            <person name="Mignone F."/>
            <person name="Miyake S."/>
            <person name="Morris K."/>
            <person name="Mottagui-Tabar S."/>
            <person name="Mulder N."/>
            <person name="Nakano N."/>
            <person name="Nakauchi H."/>
            <person name="Ng P."/>
            <person name="Nilsson R."/>
            <person name="Nishiguchi S."/>
            <person name="Nishikawa S."/>
            <person name="Nori F."/>
            <person name="Ohara O."/>
            <person name="Okazaki Y."/>
            <person name="Orlando V."/>
            <person name="Pang K.C."/>
            <person name="Pavan W.J."/>
            <person name="Pavesi G."/>
            <person name="Pesole G."/>
            <person name="Petrovsky N."/>
            <person name="Piazza S."/>
            <person name="Reed J."/>
            <person name="Reid J.F."/>
            <person name="Ring B.Z."/>
            <person name="Ringwald M."/>
            <person name="Rost B."/>
            <person name="Ruan Y."/>
            <person name="Salzberg S.L."/>
            <person name="Sandelin A."/>
            <person name="Schneider C."/>
            <person name="Schoenbach C."/>
            <person name="Sekiguchi K."/>
            <person name="Semple C.A."/>
            <person name="Seno S."/>
            <person name="Sessa L."/>
            <person name="Sheng Y."/>
            <person name="Shibata Y."/>
            <person name="Shimada H."/>
            <person name="Shimada K."/>
            <person name="Silva D."/>
            <person name="Sinclair B."/>
            <person name="Sperling S."/>
            <person name="Stupka E."/>
            <person name="Sugiura K."/>
            <person name="Sultana R."/>
            <person name="Takenaka Y."/>
            <person name="Taki K."/>
            <person name="Tammoja K."/>
            <person name="Tan S.L."/>
            <person name="Tang S."/>
            <person name="Taylor M.S."/>
            <person name="Tegner J."/>
            <person name="Teichmann S.A."/>
            <person name="Ueda H.R."/>
            <person name="van Nimwegen E."/>
            <person name="Verardo R."/>
            <person name="Wei C.L."/>
            <person name="Yagi K."/>
            <person name="Yamanishi H."/>
            <person name="Zabarovsky E."/>
            <person name="Zhu S."/>
            <person name="Zimmer A."/>
            <person name="Hide W."/>
            <person name="Bult C."/>
            <person name="Grimmond S.M."/>
            <person name="Teasdale R.D."/>
            <person name="Liu E.T."/>
            <person name="Brusic V."/>
            <person name="Quackenbush J."/>
            <person name="Wahlestedt C."/>
            <person name="Mattick J.S."/>
            <person name="Hume D.A."/>
            <person name="Kai C."/>
            <person name="Sasaki D."/>
            <person name="Tomaru Y."/>
            <person name="Fukuda S."/>
            <person name="Kanamori-Katayama M."/>
            <person name="Suzuki M."/>
            <person name="Aoki J."/>
            <person name="Arakawa T."/>
            <person name="Iida J."/>
            <person name="Imamura K."/>
            <person name="Itoh M."/>
            <person name="Kato T."/>
            <person name="Kawaji H."/>
            <person name="Kawagashira N."/>
            <person name="Kawashima T."/>
            <person name="Kojima M."/>
            <person name="Kondo S."/>
            <person name="Konno H."/>
            <person name="Nakano K."/>
            <person name="Ninomiya N."/>
            <person name="Nishio T."/>
            <person name="Okada M."/>
            <person name="Plessy C."/>
            <person name="Shibata K."/>
            <person name="Shiraki T."/>
            <person name="Suzuki S."/>
            <person name="Tagami M."/>
            <person name="Waki K."/>
            <person name="Watahiki A."/>
            <person name="Okamura-Oho Y."/>
            <person name="Suzuki H."/>
            <person name="Kawai J."/>
            <person name="Hayashizaki Y."/>
        </authorList>
    </citation>
    <scope>NUCLEOTIDE SEQUENCE [LARGE SCALE MRNA]</scope>
    <source>
        <strain>C57BL/6J</strain>
        <tissue>Cerebellum</tissue>
    </source>
</reference>
<reference key="2">
    <citation type="journal article" date="2009" name="PLoS Biol.">
        <title>Lineage-specific biology revealed by a finished genome assembly of the mouse.</title>
        <authorList>
            <person name="Church D.M."/>
            <person name="Goodstadt L."/>
            <person name="Hillier L.W."/>
            <person name="Zody M.C."/>
            <person name="Goldstein S."/>
            <person name="She X."/>
            <person name="Bult C.J."/>
            <person name="Agarwala R."/>
            <person name="Cherry J.L."/>
            <person name="DiCuccio M."/>
            <person name="Hlavina W."/>
            <person name="Kapustin Y."/>
            <person name="Meric P."/>
            <person name="Maglott D."/>
            <person name="Birtle Z."/>
            <person name="Marques A.C."/>
            <person name="Graves T."/>
            <person name="Zhou S."/>
            <person name="Teague B."/>
            <person name="Potamousis K."/>
            <person name="Churas C."/>
            <person name="Place M."/>
            <person name="Herschleb J."/>
            <person name="Runnheim R."/>
            <person name="Forrest D."/>
            <person name="Amos-Landgraf J."/>
            <person name="Schwartz D.C."/>
            <person name="Cheng Z."/>
            <person name="Lindblad-Toh K."/>
            <person name="Eichler E.E."/>
            <person name="Ponting C.P."/>
        </authorList>
    </citation>
    <scope>NUCLEOTIDE SEQUENCE [LARGE SCALE GENOMIC DNA]</scope>
    <source>
        <strain>C57BL/6J</strain>
    </source>
</reference>
<reference key="3">
    <citation type="journal article" date="2010" name="Cell">
        <title>A tissue-specific atlas of mouse protein phosphorylation and expression.</title>
        <authorList>
            <person name="Huttlin E.L."/>
            <person name="Jedrychowski M.P."/>
            <person name="Elias J.E."/>
            <person name="Goswami T."/>
            <person name="Rad R."/>
            <person name="Beausoleil S.A."/>
            <person name="Villen J."/>
            <person name="Haas W."/>
            <person name="Sowa M.E."/>
            <person name="Gygi S.P."/>
        </authorList>
    </citation>
    <scope>IDENTIFICATION BY MASS SPECTROMETRY [LARGE SCALE ANALYSIS]</scope>
    <source>
        <tissue>Brain</tissue>
        <tissue>Brown adipose tissue</tissue>
        <tissue>Kidney</tissue>
        <tissue>Lung</tissue>
        <tissue>Testis</tissue>
    </source>
</reference>
<reference key="4">
    <citation type="journal article" date="2011" name="Nucleic Acids Res.">
        <title>Arxes: retrotransposed genes required for adipogenesis.</title>
        <authorList>
            <person name="Prokesch A."/>
            <person name="Bogner-Strauss J.G."/>
            <person name="Hackl H."/>
            <person name="Rieder D."/>
            <person name="Neuhold C."/>
            <person name="Walenta E."/>
            <person name="Krogsdam A."/>
            <person name="Scheideler M."/>
            <person name="Papak C."/>
            <person name="Wong W.C."/>
            <person name="Vinson C."/>
            <person name="Eisenhaber F."/>
            <person name="Trajanoski Z."/>
        </authorList>
    </citation>
    <scope>FUNCTION</scope>
    <scope>SUBCELLULAR LOCATION</scope>
    <scope>TISSUE SPECIFICITY</scope>
    <scope>DEVELOPMENTAL STAGE</scope>
    <scope>INDUCTION</scope>
</reference>
<keyword id="KW-0256">Endoplasmic reticulum</keyword>
<keyword id="KW-0325">Glycoprotein</keyword>
<keyword id="KW-0472">Membrane</keyword>
<keyword id="KW-1185">Reference proteome</keyword>
<keyword id="KW-0735">Signal-anchor</keyword>
<keyword id="KW-0812">Transmembrane</keyword>
<keyword id="KW-1133">Transmembrane helix</keyword>